<organism>
    <name type="scientific">Leptospira interrogans serogroup Icterohaemorrhagiae serovar Lai (strain 56601)</name>
    <dbReference type="NCBI Taxonomy" id="189518"/>
    <lineage>
        <taxon>Bacteria</taxon>
        <taxon>Pseudomonadati</taxon>
        <taxon>Spirochaetota</taxon>
        <taxon>Spirochaetia</taxon>
        <taxon>Leptospirales</taxon>
        <taxon>Leptospiraceae</taxon>
        <taxon>Leptospira</taxon>
    </lineage>
</organism>
<dbReference type="EMBL" id="AE010300">
    <property type="protein sequence ID" value="AAN47512.1"/>
    <property type="molecule type" value="Genomic_DNA"/>
</dbReference>
<dbReference type="RefSeq" id="NP_710494.1">
    <property type="nucleotide sequence ID" value="NC_004342.2"/>
</dbReference>
<dbReference type="RefSeq" id="WP_000102023.1">
    <property type="nucleotide sequence ID" value="NC_004342.2"/>
</dbReference>
<dbReference type="SMR" id="Q8F983"/>
<dbReference type="FunCoup" id="Q8F983">
    <property type="interactions" value="522"/>
</dbReference>
<dbReference type="STRING" id="189518.LA_0313"/>
<dbReference type="PaxDb" id="189518-LA_0313"/>
<dbReference type="EnsemblBacteria" id="AAN47512">
    <property type="protein sequence ID" value="AAN47512"/>
    <property type="gene ID" value="LA_0313"/>
</dbReference>
<dbReference type="GeneID" id="61143624"/>
<dbReference type="KEGG" id="lil:LA_0313"/>
<dbReference type="PATRIC" id="fig|189518.3.peg.315"/>
<dbReference type="HOGENOM" id="CLU_002794_4_1_12"/>
<dbReference type="InParanoid" id="Q8F983"/>
<dbReference type="OrthoDB" id="9804431at2"/>
<dbReference type="Proteomes" id="UP000001408">
    <property type="component" value="Chromosome I"/>
</dbReference>
<dbReference type="GO" id="GO:0005737">
    <property type="term" value="C:cytoplasm"/>
    <property type="evidence" value="ECO:0007669"/>
    <property type="project" value="UniProtKB-SubCell"/>
</dbReference>
<dbReference type="GO" id="GO:0005525">
    <property type="term" value="F:GTP binding"/>
    <property type="evidence" value="ECO:0007669"/>
    <property type="project" value="UniProtKB-UniRule"/>
</dbReference>
<dbReference type="GO" id="GO:0003924">
    <property type="term" value="F:GTPase activity"/>
    <property type="evidence" value="ECO:0000318"/>
    <property type="project" value="GO_Central"/>
</dbReference>
<dbReference type="GO" id="GO:0003746">
    <property type="term" value="F:translation elongation factor activity"/>
    <property type="evidence" value="ECO:0000318"/>
    <property type="project" value="GO_Central"/>
</dbReference>
<dbReference type="CDD" id="cd01886">
    <property type="entry name" value="EF-G"/>
    <property type="match status" value="1"/>
</dbReference>
<dbReference type="CDD" id="cd16262">
    <property type="entry name" value="EFG_III"/>
    <property type="match status" value="1"/>
</dbReference>
<dbReference type="CDD" id="cd01434">
    <property type="entry name" value="EFG_mtEFG1_IV"/>
    <property type="match status" value="1"/>
</dbReference>
<dbReference type="CDD" id="cd04091">
    <property type="entry name" value="mtEFG1_II_like"/>
    <property type="match status" value="1"/>
</dbReference>
<dbReference type="FunFam" id="3.30.230.10:FF:000003">
    <property type="entry name" value="Elongation factor G"/>
    <property type="match status" value="1"/>
</dbReference>
<dbReference type="FunFam" id="3.30.70.240:FF:000001">
    <property type="entry name" value="Elongation factor G"/>
    <property type="match status" value="1"/>
</dbReference>
<dbReference type="FunFam" id="3.30.70.870:FF:000001">
    <property type="entry name" value="Elongation factor G"/>
    <property type="match status" value="1"/>
</dbReference>
<dbReference type="FunFam" id="3.40.50.300:FF:001393">
    <property type="entry name" value="Elongation factor G"/>
    <property type="match status" value="1"/>
</dbReference>
<dbReference type="FunFam" id="2.40.30.10:FF:000022">
    <property type="entry name" value="Elongation factor G, mitochondrial"/>
    <property type="match status" value="1"/>
</dbReference>
<dbReference type="Gene3D" id="3.30.230.10">
    <property type="match status" value="1"/>
</dbReference>
<dbReference type="Gene3D" id="3.30.70.240">
    <property type="match status" value="1"/>
</dbReference>
<dbReference type="Gene3D" id="3.30.70.870">
    <property type="entry name" value="Elongation Factor G (Translational Gtpase), domain 3"/>
    <property type="match status" value="1"/>
</dbReference>
<dbReference type="Gene3D" id="3.40.50.300">
    <property type="entry name" value="P-loop containing nucleotide triphosphate hydrolases"/>
    <property type="match status" value="1"/>
</dbReference>
<dbReference type="Gene3D" id="2.40.30.10">
    <property type="entry name" value="Translation factors"/>
    <property type="match status" value="1"/>
</dbReference>
<dbReference type="HAMAP" id="MF_00054_B">
    <property type="entry name" value="EF_G_EF_2_B"/>
    <property type="match status" value="1"/>
</dbReference>
<dbReference type="InterPro" id="IPR041095">
    <property type="entry name" value="EFG_II"/>
</dbReference>
<dbReference type="InterPro" id="IPR009022">
    <property type="entry name" value="EFG_III"/>
</dbReference>
<dbReference type="InterPro" id="IPR035647">
    <property type="entry name" value="EFG_III/V"/>
</dbReference>
<dbReference type="InterPro" id="IPR047872">
    <property type="entry name" value="EFG_IV"/>
</dbReference>
<dbReference type="InterPro" id="IPR000640">
    <property type="entry name" value="EFG_V-like"/>
</dbReference>
<dbReference type="InterPro" id="IPR004161">
    <property type="entry name" value="EFTu-like_2"/>
</dbReference>
<dbReference type="InterPro" id="IPR031157">
    <property type="entry name" value="G_TR_CS"/>
</dbReference>
<dbReference type="InterPro" id="IPR027417">
    <property type="entry name" value="P-loop_NTPase"/>
</dbReference>
<dbReference type="InterPro" id="IPR020568">
    <property type="entry name" value="Ribosomal_Su5_D2-typ_SF"/>
</dbReference>
<dbReference type="InterPro" id="IPR014721">
    <property type="entry name" value="Ribsml_uS5_D2-typ_fold_subgr"/>
</dbReference>
<dbReference type="InterPro" id="IPR005225">
    <property type="entry name" value="Small_GTP-bd"/>
</dbReference>
<dbReference type="InterPro" id="IPR000795">
    <property type="entry name" value="T_Tr_GTP-bd_dom"/>
</dbReference>
<dbReference type="InterPro" id="IPR009000">
    <property type="entry name" value="Transl_B-barrel_sf"/>
</dbReference>
<dbReference type="InterPro" id="IPR004540">
    <property type="entry name" value="Transl_elong_EFG/EF2"/>
</dbReference>
<dbReference type="InterPro" id="IPR005517">
    <property type="entry name" value="Transl_elong_EFG/EF2_IV"/>
</dbReference>
<dbReference type="NCBIfam" id="TIGR00484">
    <property type="entry name" value="EF-G"/>
    <property type="match status" value="1"/>
</dbReference>
<dbReference type="NCBIfam" id="NF009381">
    <property type="entry name" value="PRK12740.1-5"/>
    <property type="match status" value="1"/>
</dbReference>
<dbReference type="NCBIfam" id="TIGR00231">
    <property type="entry name" value="small_GTP"/>
    <property type="match status" value="1"/>
</dbReference>
<dbReference type="PANTHER" id="PTHR43636">
    <property type="entry name" value="ELONGATION FACTOR G, MITOCHONDRIAL"/>
    <property type="match status" value="1"/>
</dbReference>
<dbReference type="PANTHER" id="PTHR43636:SF2">
    <property type="entry name" value="ELONGATION FACTOR G, MITOCHONDRIAL"/>
    <property type="match status" value="1"/>
</dbReference>
<dbReference type="Pfam" id="PF00679">
    <property type="entry name" value="EFG_C"/>
    <property type="match status" value="1"/>
</dbReference>
<dbReference type="Pfam" id="PF14492">
    <property type="entry name" value="EFG_III"/>
    <property type="match status" value="1"/>
</dbReference>
<dbReference type="Pfam" id="PF03764">
    <property type="entry name" value="EFG_IV"/>
    <property type="match status" value="1"/>
</dbReference>
<dbReference type="Pfam" id="PF00009">
    <property type="entry name" value="GTP_EFTU"/>
    <property type="match status" value="1"/>
</dbReference>
<dbReference type="Pfam" id="PF03144">
    <property type="entry name" value="GTP_EFTU_D2"/>
    <property type="match status" value="1"/>
</dbReference>
<dbReference type="PRINTS" id="PR00315">
    <property type="entry name" value="ELONGATNFCT"/>
</dbReference>
<dbReference type="SMART" id="SM00838">
    <property type="entry name" value="EFG_C"/>
    <property type="match status" value="1"/>
</dbReference>
<dbReference type="SMART" id="SM00889">
    <property type="entry name" value="EFG_IV"/>
    <property type="match status" value="1"/>
</dbReference>
<dbReference type="SUPFAM" id="SSF54980">
    <property type="entry name" value="EF-G C-terminal domain-like"/>
    <property type="match status" value="2"/>
</dbReference>
<dbReference type="SUPFAM" id="SSF52540">
    <property type="entry name" value="P-loop containing nucleoside triphosphate hydrolases"/>
    <property type="match status" value="1"/>
</dbReference>
<dbReference type="SUPFAM" id="SSF54211">
    <property type="entry name" value="Ribosomal protein S5 domain 2-like"/>
    <property type="match status" value="1"/>
</dbReference>
<dbReference type="SUPFAM" id="SSF50447">
    <property type="entry name" value="Translation proteins"/>
    <property type="match status" value="1"/>
</dbReference>
<dbReference type="PROSITE" id="PS00301">
    <property type="entry name" value="G_TR_1"/>
    <property type="match status" value="1"/>
</dbReference>
<dbReference type="PROSITE" id="PS51722">
    <property type="entry name" value="G_TR_2"/>
    <property type="match status" value="1"/>
</dbReference>
<feature type="chain" id="PRO_0000091145" description="Elongation factor G">
    <location>
        <begin position="1"/>
        <end position="706"/>
    </location>
</feature>
<feature type="domain" description="tr-type G">
    <location>
        <begin position="15"/>
        <end position="291"/>
    </location>
</feature>
<feature type="binding site" evidence="1">
    <location>
        <begin position="24"/>
        <end position="31"/>
    </location>
    <ligand>
        <name>GTP</name>
        <dbReference type="ChEBI" id="CHEBI:37565"/>
    </ligand>
</feature>
<feature type="binding site" evidence="1">
    <location>
        <begin position="91"/>
        <end position="95"/>
    </location>
    <ligand>
        <name>GTP</name>
        <dbReference type="ChEBI" id="CHEBI:37565"/>
    </ligand>
</feature>
<feature type="binding site" evidence="1">
    <location>
        <begin position="145"/>
        <end position="148"/>
    </location>
    <ligand>
        <name>GTP</name>
        <dbReference type="ChEBI" id="CHEBI:37565"/>
    </ligand>
</feature>
<evidence type="ECO:0000255" key="1">
    <source>
        <dbReference type="HAMAP-Rule" id="MF_00054"/>
    </source>
</evidence>
<protein>
    <recommendedName>
        <fullName evidence="1">Elongation factor G</fullName>
        <shortName evidence="1">EF-G</shortName>
    </recommendedName>
</protein>
<accession>Q8F983</accession>
<keyword id="KW-0963">Cytoplasm</keyword>
<keyword id="KW-0251">Elongation factor</keyword>
<keyword id="KW-0342">GTP-binding</keyword>
<keyword id="KW-0547">Nucleotide-binding</keyword>
<keyword id="KW-0648">Protein biosynthesis</keyword>
<keyword id="KW-1185">Reference proteome</keyword>
<gene>
    <name evidence="1" type="primary">fusA</name>
    <name type="synonym">fusA1</name>
    <name type="ordered locus">LA_0313</name>
</gene>
<sequence length="706" mass="79001">MSTAVAEFKPSEKLLKTRNIGISAHIDSGKTTLTERILFYTNRIHAIHEVRGKDGVGAKMDSMDLERERGITIQSAATYCQWKNHTINIIDTPGHVDFTVEVERSLRVLDSAILVLCGVAGVQSQSITVDRQMRRYNVPRVAFINKLDRTGANPFRVIEQLKEKLKHNAVPVQIPIGLENDLKGIVDLVTMKAYYFEGKDGMDIQEKEIPDDLKELAQKKHEELLDAASMFSDELTEALLEGTPTEEMIKKAIRTGTIELKMTPVFMGSAFKNKGVQKLLDGVLDYLASPVDVKNKALDQNNNEEMIVLESNFEKPLVCLAFKLEDGRYGQLTYVRVYQGKLAKGMTIYNMSNNKKHNVGRLCRMHSDEMEDIDSAEAGDIIALFGIDCASGDTFTDGKLKVSMESMFVPAPVISLTIEAKESKHLNNLAKALNRFTKEDPTFQTHVDQESGQTIIKGMGELHLEVYIERMKREYGVELITGAPQVAYRETITSKADFDYTHKKQTGGQGQFGRVAGYMEPIPLEETLDYDFVNKVVGGAIPREYIQSVDKGFKSCLERGSLIGFPIIGVRCVINDGAYHDVDSSDMAFQIAGRYAFRQGFNKANPQILEPIMKVEVDGPSEFQGAILGSLNQRRGMILNTTEEDAYCKTEAEVPLADMFGYSTVLRSSTQGKAEFSMEFSRYAPVPRNVAEELMKKYKVNNKDED</sequence>
<reference key="1">
    <citation type="journal article" date="2003" name="Nature">
        <title>Unique physiological and pathogenic features of Leptospira interrogans revealed by whole-genome sequencing.</title>
        <authorList>
            <person name="Ren S.-X."/>
            <person name="Fu G."/>
            <person name="Jiang X.-G."/>
            <person name="Zeng R."/>
            <person name="Miao Y.-G."/>
            <person name="Xu H."/>
            <person name="Zhang Y.-X."/>
            <person name="Xiong H."/>
            <person name="Lu G."/>
            <person name="Lu L.-F."/>
            <person name="Jiang H.-Q."/>
            <person name="Jia J."/>
            <person name="Tu Y.-F."/>
            <person name="Jiang J.-X."/>
            <person name="Gu W.-Y."/>
            <person name="Zhang Y.-Q."/>
            <person name="Cai Z."/>
            <person name="Sheng H.-H."/>
            <person name="Yin H.-F."/>
            <person name="Zhang Y."/>
            <person name="Zhu G.-F."/>
            <person name="Wan M."/>
            <person name="Huang H.-L."/>
            <person name="Qian Z."/>
            <person name="Wang S.-Y."/>
            <person name="Ma W."/>
            <person name="Yao Z.-J."/>
            <person name="Shen Y."/>
            <person name="Qiang B.-Q."/>
            <person name="Xia Q.-C."/>
            <person name="Guo X.-K."/>
            <person name="Danchin A."/>
            <person name="Saint Girons I."/>
            <person name="Somerville R.L."/>
            <person name="Wen Y.-M."/>
            <person name="Shi M.-H."/>
            <person name="Chen Z."/>
            <person name="Xu J.-G."/>
            <person name="Zhao G.-P."/>
        </authorList>
    </citation>
    <scope>NUCLEOTIDE SEQUENCE [LARGE SCALE GENOMIC DNA]</scope>
    <source>
        <strain>56601</strain>
    </source>
</reference>
<proteinExistence type="inferred from homology"/>
<comment type="function">
    <text evidence="1">Catalyzes the GTP-dependent ribosomal translocation step during translation elongation. During this step, the ribosome changes from the pre-translocational (PRE) to the post-translocational (POST) state as the newly formed A-site-bound peptidyl-tRNA and P-site-bound deacylated tRNA move to the P and E sites, respectively. Catalyzes the coordinated movement of the two tRNA molecules, the mRNA and conformational changes in the ribosome.</text>
</comment>
<comment type="subcellular location">
    <subcellularLocation>
        <location evidence="1">Cytoplasm</location>
    </subcellularLocation>
</comment>
<comment type="similarity">
    <text evidence="1">Belongs to the TRAFAC class translation factor GTPase superfamily. Classic translation factor GTPase family. EF-G/EF-2 subfamily.</text>
</comment>
<name>EFG_LEPIN</name>